<reference key="1">
    <citation type="journal article" date="2010" name="Environ. Microbiol.">
        <title>The genome of Syntrophomonas wolfei: new insights into syntrophic metabolism and biohydrogen production.</title>
        <authorList>
            <person name="Sieber J.R."/>
            <person name="Sims D.R."/>
            <person name="Han C."/>
            <person name="Kim E."/>
            <person name="Lykidis A."/>
            <person name="Lapidus A.L."/>
            <person name="McDonnald E."/>
            <person name="Rohlin L."/>
            <person name="Culley D.E."/>
            <person name="Gunsalus R."/>
            <person name="McInerney M.J."/>
        </authorList>
    </citation>
    <scope>NUCLEOTIDE SEQUENCE [LARGE SCALE GENOMIC DNA]</scope>
    <source>
        <strain>DSM 2245B / Goettingen</strain>
    </source>
</reference>
<name>RL16_SYNWW</name>
<protein>
    <recommendedName>
        <fullName evidence="1">Large ribosomal subunit protein uL16</fullName>
    </recommendedName>
    <alternativeName>
        <fullName evidence="3">50S ribosomal protein L16</fullName>
    </alternativeName>
</protein>
<proteinExistence type="inferred from homology"/>
<feature type="chain" id="PRO_1000054725" description="Large ribosomal subunit protein uL16">
    <location>
        <begin position="1"/>
        <end position="144"/>
    </location>
</feature>
<feature type="region of interest" description="Disordered" evidence="2">
    <location>
        <begin position="1"/>
        <end position="22"/>
    </location>
</feature>
<feature type="compositionally biased region" description="Basic residues" evidence="2">
    <location>
        <begin position="1"/>
        <end position="14"/>
    </location>
</feature>
<sequence>MLTPKRVKHRKQHRPSLAGKANKGNTITYGDYGLQALEPAWITNRQIEAARIAINRYVKRGGKLWIKIFPDRPLTVKPAETRMGKGKGSPEHWVAVVKPGRVMFELSGVSEEVAREAMRLAAHKLPVKCKFLKREEMGGEVSES</sequence>
<organism>
    <name type="scientific">Syntrophomonas wolfei subsp. wolfei (strain DSM 2245B / Goettingen)</name>
    <dbReference type="NCBI Taxonomy" id="335541"/>
    <lineage>
        <taxon>Bacteria</taxon>
        <taxon>Bacillati</taxon>
        <taxon>Bacillota</taxon>
        <taxon>Clostridia</taxon>
        <taxon>Eubacteriales</taxon>
        <taxon>Syntrophomonadaceae</taxon>
        <taxon>Syntrophomonas</taxon>
    </lineage>
</organism>
<gene>
    <name evidence="1" type="primary">rplP</name>
    <name type="ordered locus">Swol_2326</name>
</gene>
<comment type="function">
    <text evidence="1">Binds 23S rRNA and is also seen to make contacts with the A and possibly P site tRNAs.</text>
</comment>
<comment type="subunit">
    <text evidence="1">Part of the 50S ribosomal subunit.</text>
</comment>
<comment type="similarity">
    <text evidence="1">Belongs to the universal ribosomal protein uL16 family.</text>
</comment>
<evidence type="ECO:0000255" key="1">
    <source>
        <dbReference type="HAMAP-Rule" id="MF_01342"/>
    </source>
</evidence>
<evidence type="ECO:0000256" key="2">
    <source>
        <dbReference type="SAM" id="MobiDB-lite"/>
    </source>
</evidence>
<evidence type="ECO:0000305" key="3"/>
<accession>Q0AUI7</accession>
<keyword id="KW-1185">Reference proteome</keyword>
<keyword id="KW-0687">Ribonucleoprotein</keyword>
<keyword id="KW-0689">Ribosomal protein</keyword>
<keyword id="KW-0694">RNA-binding</keyword>
<keyword id="KW-0699">rRNA-binding</keyword>
<keyword id="KW-0820">tRNA-binding</keyword>
<dbReference type="EMBL" id="CP000448">
    <property type="protein sequence ID" value="ABI69617.1"/>
    <property type="molecule type" value="Genomic_DNA"/>
</dbReference>
<dbReference type="RefSeq" id="WP_011641701.1">
    <property type="nucleotide sequence ID" value="NC_008346.1"/>
</dbReference>
<dbReference type="SMR" id="Q0AUI7"/>
<dbReference type="STRING" id="335541.Swol_2326"/>
<dbReference type="KEGG" id="swo:Swol_2326"/>
<dbReference type="eggNOG" id="COG0197">
    <property type="taxonomic scope" value="Bacteria"/>
</dbReference>
<dbReference type="HOGENOM" id="CLU_078858_2_1_9"/>
<dbReference type="OrthoDB" id="9802589at2"/>
<dbReference type="Proteomes" id="UP000001968">
    <property type="component" value="Chromosome"/>
</dbReference>
<dbReference type="GO" id="GO:0022625">
    <property type="term" value="C:cytosolic large ribosomal subunit"/>
    <property type="evidence" value="ECO:0007669"/>
    <property type="project" value="TreeGrafter"/>
</dbReference>
<dbReference type="GO" id="GO:0019843">
    <property type="term" value="F:rRNA binding"/>
    <property type="evidence" value="ECO:0007669"/>
    <property type="project" value="UniProtKB-UniRule"/>
</dbReference>
<dbReference type="GO" id="GO:0003735">
    <property type="term" value="F:structural constituent of ribosome"/>
    <property type="evidence" value="ECO:0007669"/>
    <property type="project" value="InterPro"/>
</dbReference>
<dbReference type="GO" id="GO:0000049">
    <property type="term" value="F:tRNA binding"/>
    <property type="evidence" value="ECO:0007669"/>
    <property type="project" value="UniProtKB-KW"/>
</dbReference>
<dbReference type="GO" id="GO:0006412">
    <property type="term" value="P:translation"/>
    <property type="evidence" value="ECO:0007669"/>
    <property type="project" value="UniProtKB-UniRule"/>
</dbReference>
<dbReference type="CDD" id="cd01433">
    <property type="entry name" value="Ribosomal_L16_L10e"/>
    <property type="match status" value="1"/>
</dbReference>
<dbReference type="FunFam" id="3.90.1170.10:FF:000001">
    <property type="entry name" value="50S ribosomal protein L16"/>
    <property type="match status" value="1"/>
</dbReference>
<dbReference type="Gene3D" id="3.90.1170.10">
    <property type="entry name" value="Ribosomal protein L10e/L16"/>
    <property type="match status" value="1"/>
</dbReference>
<dbReference type="HAMAP" id="MF_01342">
    <property type="entry name" value="Ribosomal_uL16"/>
    <property type="match status" value="1"/>
</dbReference>
<dbReference type="InterPro" id="IPR047873">
    <property type="entry name" value="Ribosomal_uL16"/>
</dbReference>
<dbReference type="InterPro" id="IPR000114">
    <property type="entry name" value="Ribosomal_uL16_bact-type"/>
</dbReference>
<dbReference type="InterPro" id="IPR020798">
    <property type="entry name" value="Ribosomal_uL16_CS"/>
</dbReference>
<dbReference type="InterPro" id="IPR016180">
    <property type="entry name" value="Ribosomal_uL16_dom"/>
</dbReference>
<dbReference type="InterPro" id="IPR036920">
    <property type="entry name" value="Ribosomal_uL16_sf"/>
</dbReference>
<dbReference type="NCBIfam" id="TIGR01164">
    <property type="entry name" value="rplP_bact"/>
    <property type="match status" value="1"/>
</dbReference>
<dbReference type="PANTHER" id="PTHR12220">
    <property type="entry name" value="50S/60S RIBOSOMAL PROTEIN L16"/>
    <property type="match status" value="1"/>
</dbReference>
<dbReference type="PANTHER" id="PTHR12220:SF13">
    <property type="entry name" value="LARGE RIBOSOMAL SUBUNIT PROTEIN UL16M"/>
    <property type="match status" value="1"/>
</dbReference>
<dbReference type="Pfam" id="PF00252">
    <property type="entry name" value="Ribosomal_L16"/>
    <property type="match status" value="1"/>
</dbReference>
<dbReference type="PRINTS" id="PR00060">
    <property type="entry name" value="RIBOSOMALL16"/>
</dbReference>
<dbReference type="SUPFAM" id="SSF54686">
    <property type="entry name" value="Ribosomal protein L16p/L10e"/>
    <property type="match status" value="1"/>
</dbReference>
<dbReference type="PROSITE" id="PS00586">
    <property type="entry name" value="RIBOSOMAL_L16_1"/>
    <property type="match status" value="1"/>
</dbReference>
<dbReference type="PROSITE" id="PS00701">
    <property type="entry name" value="RIBOSOMAL_L16_2"/>
    <property type="match status" value="1"/>
</dbReference>